<proteinExistence type="inferred from homology"/>
<reference key="1">
    <citation type="submission" date="2007-07" db="EMBL/GenBank/DDBJ databases">
        <title>Complete genome sequence of Campylobacter hominis ATCC BAA-381, a commensal isolated from the human gastrointestinal tract.</title>
        <authorList>
            <person name="Fouts D.E."/>
            <person name="Mongodin E.F."/>
            <person name="Puiu D."/>
            <person name="Sebastian Y."/>
            <person name="Miller W.G."/>
            <person name="Mandrell R.E."/>
            <person name="Nelson K.E."/>
        </authorList>
    </citation>
    <scope>NUCLEOTIDE SEQUENCE [LARGE SCALE GENOMIC DNA]</scope>
    <source>
        <strain>ATCC BAA-381 / DSM 21671 / CCUG 45161 / LMG 19568 / NCTC 13146 / CH001A</strain>
    </source>
</reference>
<organism>
    <name type="scientific">Campylobacter hominis (strain ATCC BAA-381 / DSM 21671 / CCUG 45161 / LMG 19568 / NCTC 13146 / CH001A)</name>
    <dbReference type="NCBI Taxonomy" id="360107"/>
    <lineage>
        <taxon>Bacteria</taxon>
        <taxon>Pseudomonadati</taxon>
        <taxon>Campylobacterota</taxon>
        <taxon>Epsilonproteobacteria</taxon>
        <taxon>Campylobacterales</taxon>
        <taxon>Campylobacteraceae</taxon>
        <taxon>Campylobacter</taxon>
    </lineage>
</organism>
<evidence type="ECO:0000255" key="1">
    <source>
        <dbReference type="HAMAP-Rule" id="MF_01690"/>
    </source>
</evidence>
<sequence>MRHFDSMEILNELLKFQSITPDDDGAFNYISMILNDFEEINIDKNGVKNVIFRKTFGPGVHICFAGHIDVVKPGIGWDSDPFDPLQKDGFIYARGAQDMKSAVASMICAVSGVQNFNGTISLLLTSDEEGDAVFGTREALKFLQSRGELPDFAVVGEPTCETVFGDTIKVGRRGSINGILRINGIQGHVAYPNKCVNPVHILASKFANFAGHDFDNGNDFFEPSKLVVVDIRGGMQVCNVTPSDVSVMFNVRNSNLTDANDIKNFINDLYKDCDFDLNLKVSSNPFLTDKNSKIVQKLSQSVQKISGVCPVFTTGGGTSDARYFAEFNVDVAEFGVINDRLHAVNERVSVNEVQKLTEIYKDLIENF</sequence>
<protein>
    <recommendedName>
        <fullName evidence="1">Succinyl-diaminopimelate desuccinylase</fullName>
        <shortName evidence="1">SDAP desuccinylase</shortName>
        <ecNumber evidence="1">3.5.1.18</ecNumber>
    </recommendedName>
    <alternativeName>
        <fullName evidence="1">N-succinyl-LL-2,6-diaminoheptanedioate amidohydrolase</fullName>
    </alternativeName>
</protein>
<dbReference type="EC" id="3.5.1.18" evidence="1"/>
<dbReference type="EMBL" id="CP000776">
    <property type="protein sequence ID" value="ABS52550.1"/>
    <property type="molecule type" value="Genomic_DNA"/>
</dbReference>
<dbReference type="RefSeq" id="WP_012108127.1">
    <property type="nucleotide sequence ID" value="NC_009714.1"/>
</dbReference>
<dbReference type="SMR" id="A7I005"/>
<dbReference type="STRING" id="360107.CHAB381_0240"/>
<dbReference type="KEGG" id="cha:CHAB381_0240"/>
<dbReference type="eggNOG" id="COG0624">
    <property type="taxonomic scope" value="Bacteria"/>
</dbReference>
<dbReference type="HOGENOM" id="CLU_021802_4_0_7"/>
<dbReference type="OrthoDB" id="5486471at2"/>
<dbReference type="UniPathway" id="UPA00034">
    <property type="reaction ID" value="UER00021"/>
</dbReference>
<dbReference type="Proteomes" id="UP000002407">
    <property type="component" value="Chromosome"/>
</dbReference>
<dbReference type="GO" id="GO:0008777">
    <property type="term" value="F:acetylornithine deacetylase activity"/>
    <property type="evidence" value="ECO:0007669"/>
    <property type="project" value="TreeGrafter"/>
</dbReference>
<dbReference type="GO" id="GO:0046872">
    <property type="term" value="F:metal ion binding"/>
    <property type="evidence" value="ECO:0007669"/>
    <property type="project" value="UniProtKB-KW"/>
</dbReference>
<dbReference type="GO" id="GO:0009014">
    <property type="term" value="F:succinyl-diaminopimelate desuccinylase activity"/>
    <property type="evidence" value="ECO:0007669"/>
    <property type="project" value="UniProtKB-EC"/>
</dbReference>
<dbReference type="GO" id="GO:0019877">
    <property type="term" value="P:diaminopimelate biosynthetic process"/>
    <property type="evidence" value="ECO:0007669"/>
    <property type="project" value="UniProtKB-KW"/>
</dbReference>
<dbReference type="GO" id="GO:0006526">
    <property type="term" value="P:L-arginine biosynthetic process"/>
    <property type="evidence" value="ECO:0007669"/>
    <property type="project" value="TreeGrafter"/>
</dbReference>
<dbReference type="GO" id="GO:0009089">
    <property type="term" value="P:lysine biosynthetic process via diaminopimelate"/>
    <property type="evidence" value="ECO:0007669"/>
    <property type="project" value="UniProtKB-UniPathway"/>
</dbReference>
<dbReference type="CDD" id="cd03891">
    <property type="entry name" value="M20_DapE_proteobac"/>
    <property type="match status" value="1"/>
</dbReference>
<dbReference type="Gene3D" id="1.10.150.900">
    <property type="match status" value="1"/>
</dbReference>
<dbReference type="Gene3D" id="3.30.70.360">
    <property type="match status" value="1"/>
</dbReference>
<dbReference type="Gene3D" id="3.40.630.10">
    <property type="entry name" value="Zn peptidases"/>
    <property type="match status" value="1"/>
</dbReference>
<dbReference type="HAMAP" id="MF_01690">
    <property type="entry name" value="DapE"/>
    <property type="match status" value="1"/>
</dbReference>
<dbReference type="InterPro" id="IPR001261">
    <property type="entry name" value="ArgE/DapE_CS"/>
</dbReference>
<dbReference type="InterPro" id="IPR036264">
    <property type="entry name" value="Bact_exopeptidase_dim_dom"/>
</dbReference>
<dbReference type="InterPro" id="IPR005941">
    <property type="entry name" value="DapE_proteobac"/>
</dbReference>
<dbReference type="InterPro" id="IPR002933">
    <property type="entry name" value="Peptidase_M20"/>
</dbReference>
<dbReference type="InterPro" id="IPR011650">
    <property type="entry name" value="Peptidase_M20_dimer"/>
</dbReference>
<dbReference type="InterPro" id="IPR050072">
    <property type="entry name" value="Peptidase_M20A"/>
</dbReference>
<dbReference type="NCBIfam" id="TIGR01246">
    <property type="entry name" value="dapE_proteo"/>
    <property type="match status" value="1"/>
</dbReference>
<dbReference type="NCBIfam" id="NF009557">
    <property type="entry name" value="PRK13009.1"/>
    <property type="match status" value="1"/>
</dbReference>
<dbReference type="PANTHER" id="PTHR43808">
    <property type="entry name" value="ACETYLORNITHINE DEACETYLASE"/>
    <property type="match status" value="1"/>
</dbReference>
<dbReference type="PANTHER" id="PTHR43808:SF31">
    <property type="entry name" value="N-ACETYL-L-CITRULLINE DEACETYLASE"/>
    <property type="match status" value="1"/>
</dbReference>
<dbReference type="Pfam" id="PF07687">
    <property type="entry name" value="M20_dimer"/>
    <property type="match status" value="1"/>
</dbReference>
<dbReference type="Pfam" id="PF01546">
    <property type="entry name" value="Peptidase_M20"/>
    <property type="match status" value="1"/>
</dbReference>
<dbReference type="SUPFAM" id="SSF55031">
    <property type="entry name" value="Bacterial exopeptidase dimerisation domain"/>
    <property type="match status" value="1"/>
</dbReference>
<dbReference type="SUPFAM" id="SSF53187">
    <property type="entry name" value="Zn-dependent exopeptidases"/>
    <property type="match status" value="1"/>
</dbReference>
<dbReference type="PROSITE" id="PS00759">
    <property type="entry name" value="ARGE_DAPE_CPG2_2"/>
    <property type="match status" value="1"/>
</dbReference>
<name>DAPE_CAMHC</name>
<feature type="chain" id="PRO_0000375519" description="Succinyl-diaminopimelate desuccinylase">
    <location>
        <begin position="1"/>
        <end position="367"/>
    </location>
</feature>
<feature type="active site" evidence="1">
    <location>
        <position position="69"/>
    </location>
</feature>
<feature type="active site" description="Proton acceptor" evidence="1">
    <location>
        <position position="128"/>
    </location>
</feature>
<feature type="binding site" evidence="1">
    <location>
        <position position="67"/>
    </location>
    <ligand>
        <name>Zn(2+)</name>
        <dbReference type="ChEBI" id="CHEBI:29105"/>
        <label>1</label>
    </ligand>
</feature>
<feature type="binding site" evidence="1">
    <location>
        <position position="98"/>
    </location>
    <ligand>
        <name>Zn(2+)</name>
        <dbReference type="ChEBI" id="CHEBI:29105"/>
        <label>1</label>
    </ligand>
</feature>
<feature type="binding site" evidence="1">
    <location>
        <position position="98"/>
    </location>
    <ligand>
        <name>Zn(2+)</name>
        <dbReference type="ChEBI" id="CHEBI:29105"/>
        <label>2</label>
    </ligand>
</feature>
<feature type="binding site" evidence="1">
    <location>
        <position position="129"/>
    </location>
    <ligand>
        <name>Zn(2+)</name>
        <dbReference type="ChEBI" id="CHEBI:29105"/>
        <label>2</label>
    </ligand>
</feature>
<feature type="binding site" evidence="1">
    <location>
        <position position="157"/>
    </location>
    <ligand>
        <name>Zn(2+)</name>
        <dbReference type="ChEBI" id="CHEBI:29105"/>
        <label>1</label>
    </ligand>
</feature>
<feature type="binding site" evidence="1">
    <location>
        <position position="342"/>
    </location>
    <ligand>
        <name>Zn(2+)</name>
        <dbReference type="ChEBI" id="CHEBI:29105"/>
        <label>2</label>
    </ligand>
</feature>
<comment type="function">
    <text evidence="1">Catalyzes the hydrolysis of N-succinyl-L,L-diaminopimelic acid (SDAP), forming succinate and LL-2,6-diaminopimelate (DAP), an intermediate involved in the bacterial biosynthesis of lysine and meso-diaminopimelic acid, an essential component of bacterial cell walls.</text>
</comment>
<comment type="catalytic activity">
    <reaction evidence="1">
        <text>N-succinyl-(2S,6S)-2,6-diaminopimelate + H2O = (2S,6S)-2,6-diaminopimelate + succinate</text>
        <dbReference type="Rhea" id="RHEA:22608"/>
        <dbReference type="ChEBI" id="CHEBI:15377"/>
        <dbReference type="ChEBI" id="CHEBI:30031"/>
        <dbReference type="ChEBI" id="CHEBI:57609"/>
        <dbReference type="ChEBI" id="CHEBI:58087"/>
        <dbReference type="EC" id="3.5.1.18"/>
    </reaction>
</comment>
<comment type="cofactor">
    <cofactor evidence="1">
        <name>Zn(2+)</name>
        <dbReference type="ChEBI" id="CHEBI:29105"/>
    </cofactor>
    <cofactor evidence="1">
        <name>Co(2+)</name>
        <dbReference type="ChEBI" id="CHEBI:48828"/>
    </cofactor>
    <text evidence="1">Binds 2 Zn(2+) or Co(2+) ions per subunit.</text>
</comment>
<comment type="pathway">
    <text evidence="1">Amino-acid biosynthesis; L-lysine biosynthesis via DAP pathway; LL-2,6-diaminopimelate from (S)-tetrahydrodipicolinate (succinylase route): step 3/3.</text>
</comment>
<comment type="subunit">
    <text evidence="1">Homodimer.</text>
</comment>
<comment type="similarity">
    <text evidence="1">Belongs to the peptidase M20A family. DapE subfamily.</text>
</comment>
<gene>
    <name evidence="1" type="primary">dapE</name>
    <name type="ordered locus">CHAB381_0240</name>
</gene>
<keyword id="KW-0028">Amino-acid biosynthesis</keyword>
<keyword id="KW-0170">Cobalt</keyword>
<keyword id="KW-0220">Diaminopimelate biosynthesis</keyword>
<keyword id="KW-0378">Hydrolase</keyword>
<keyword id="KW-0457">Lysine biosynthesis</keyword>
<keyword id="KW-0479">Metal-binding</keyword>
<keyword id="KW-1185">Reference proteome</keyword>
<keyword id="KW-0862">Zinc</keyword>
<accession>A7I005</accession>